<keyword id="KW-0378">Hydrolase</keyword>
<keyword id="KW-0460">Magnesium</keyword>
<keyword id="KW-0479">Metal-binding</keyword>
<keyword id="KW-1185">Reference proteome</keyword>
<gene>
    <name type="ordered locus">Noca_4270</name>
</gene>
<feature type="chain" id="PRO_0000439908" description="Barbiturase 2">
    <location>
        <begin position="1"/>
        <end position="371"/>
    </location>
</feature>
<feature type="region of interest" description="RU A" evidence="1">
    <location>
        <begin position="1"/>
        <end position="104"/>
    </location>
</feature>
<feature type="region of interest" description="RU B" evidence="1">
    <location>
        <begin position="112"/>
        <end position="247"/>
    </location>
</feature>
<feature type="region of interest" description="RU C" evidence="1">
    <location>
        <begin position="253"/>
        <end position="371"/>
    </location>
</feature>
<feature type="active site" evidence="1">
    <location>
        <position position="162"/>
    </location>
</feature>
<feature type="active site" description="Nucleophile" evidence="1">
    <location>
        <position position="230"/>
    </location>
</feature>
<feature type="binding site" evidence="1">
    <location>
        <position position="53"/>
    </location>
    <ligand>
        <name>substrate</name>
    </ligand>
</feature>
<feature type="binding site" evidence="1">
    <location>
        <begin position="83"/>
        <end position="84"/>
    </location>
    <ligand>
        <name>substrate</name>
    </ligand>
</feature>
<feature type="binding site" evidence="1">
    <location>
        <position position="194"/>
    </location>
    <ligand>
        <name>substrate</name>
    </ligand>
</feature>
<feature type="binding site" evidence="1">
    <location>
        <begin position="230"/>
        <end position="231"/>
    </location>
    <ligand>
        <name>substrate</name>
    </ligand>
</feature>
<feature type="binding site" evidence="1">
    <location>
        <position position="303"/>
    </location>
    <ligand>
        <name>Mg(2+)</name>
        <dbReference type="ChEBI" id="CHEBI:18420"/>
        <note>structural</note>
    </ligand>
</feature>
<feature type="binding site" evidence="1">
    <location>
        <position position="330"/>
    </location>
    <ligand>
        <name>substrate</name>
    </ligand>
</feature>
<feature type="binding site" evidence="1">
    <location>
        <begin position="349"/>
        <end position="350"/>
    </location>
    <ligand>
        <name>substrate</name>
    </ligand>
</feature>
<feature type="binding site" evidence="1">
    <location>
        <position position="352"/>
    </location>
    <ligand>
        <name>Mg(2+)</name>
        <dbReference type="ChEBI" id="CHEBI:18420"/>
        <note>structural</note>
    </ligand>
</feature>
<feature type="binding site" evidence="1">
    <location>
        <position position="355"/>
    </location>
    <ligand>
        <name>Mg(2+)</name>
        <dbReference type="ChEBI" id="CHEBI:18420"/>
        <note>structural</note>
    </ligand>
</feature>
<feature type="binding site" evidence="1">
    <location>
        <position position="356"/>
    </location>
    <ligand>
        <name>Mg(2+)</name>
        <dbReference type="ChEBI" id="CHEBI:18420"/>
        <note>structural</note>
    </ligand>
</feature>
<feature type="binding site" evidence="1">
    <location>
        <position position="357"/>
    </location>
    <ligand>
        <name>Mg(2+)</name>
        <dbReference type="ChEBI" id="CHEBI:18420"/>
        <note>structural</note>
    </ligand>
</feature>
<feature type="binding site" evidence="1">
    <location>
        <position position="360"/>
    </location>
    <ligand>
        <name>Mg(2+)</name>
        <dbReference type="ChEBI" id="CHEBI:18420"/>
        <note>structural</note>
    </ligand>
</feature>
<feature type="site" description="Important for substrate specificity" evidence="1">
    <location>
        <position position="326"/>
    </location>
</feature>
<name>BAH2_NOCSJ</name>
<organism>
    <name type="scientific">Nocardioides sp. (strain ATCC BAA-499 / JS614)</name>
    <dbReference type="NCBI Taxonomy" id="196162"/>
    <lineage>
        <taxon>Bacteria</taxon>
        <taxon>Bacillati</taxon>
        <taxon>Actinomycetota</taxon>
        <taxon>Actinomycetes</taxon>
        <taxon>Propionibacteriales</taxon>
        <taxon>Nocardioidaceae</taxon>
        <taxon>Nocardioides</taxon>
    </lineage>
</organism>
<dbReference type="EC" id="3.5.2.1" evidence="1"/>
<dbReference type="EMBL" id="CP000509">
    <property type="protein sequence ID" value="ABL83767.1"/>
    <property type="molecule type" value="Genomic_DNA"/>
</dbReference>
<dbReference type="RefSeq" id="WP_011757696.1">
    <property type="nucleotide sequence ID" value="NC_008699.1"/>
</dbReference>
<dbReference type="SMR" id="A1SPN2"/>
<dbReference type="STRING" id="196162.Noca_4270"/>
<dbReference type="KEGG" id="nca:Noca_4270"/>
<dbReference type="eggNOG" id="ENOG502Z8BS">
    <property type="taxonomic scope" value="Bacteria"/>
</dbReference>
<dbReference type="HOGENOM" id="CLU_808206_0_0_11"/>
<dbReference type="OrthoDB" id="569708at2"/>
<dbReference type="SABIO-RK" id="A1SPN2"/>
<dbReference type="UniPathway" id="UPA00582">
    <property type="reaction ID" value="UER00644"/>
</dbReference>
<dbReference type="Proteomes" id="UP000000640">
    <property type="component" value="Chromosome"/>
</dbReference>
<dbReference type="GO" id="GO:0047694">
    <property type="term" value="F:barbiturase activity"/>
    <property type="evidence" value="ECO:0007669"/>
    <property type="project" value="UniProtKB-UniRule"/>
</dbReference>
<dbReference type="GO" id="GO:0046872">
    <property type="term" value="F:metal ion binding"/>
    <property type="evidence" value="ECO:0007669"/>
    <property type="project" value="UniProtKB-UniRule"/>
</dbReference>
<dbReference type="GO" id="GO:0006212">
    <property type="term" value="P:uracil catabolic process"/>
    <property type="evidence" value="ECO:0007669"/>
    <property type="project" value="UniProtKB-UniRule"/>
</dbReference>
<dbReference type="Gene3D" id="3.30.1330.160">
    <property type="entry name" value="Cyanuric acid hydrolase/Barbituras, RU C"/>
    <property type="match status" value="1"/>
</dbReference>
<dbReference type="Gene3D" id="3.30.1330.170">
    <property type="entry name" value="Cyanuric acid hydrolase/Barbiturase, RU A"/>
    <property type="match status" value="1"/>
</dbReference>
<dbReference type="Gene3D" id="3.30.1330.180">
    <property type="entry name" value="Cyanuric acid hydrolase/Barbiturase, RU B"/>
    <property type="match status" value="1"/>
</dbReference>
<dbReference type="HAMAP" id="MF_01989">
    <property type="entry name" value="Cyc_amidohydrol"/>
    <property type="match status" value="1"/>
</dbReference>
<dbReference type="InterPro" id="IPR014086">
    <property type="entry name" value="AtzD/Barbiturase"/>
</dbReference>
<dbReference type="InterPro" id="IPR043008">
    <property type="entry name" value="AtzD/Barbiturase_RUA"/>
</dbReference>
<dbReference type="InterPro" id="IPR043006">
    <property type="entry name" value="AtzD/Barbiturase_RUB"/>
</dbReference>
<dbReference type="InterPro" id="IPR043007">
    <property type="entry name" value="AtzD/Barbiturase_RUC"/>
</dbReference>
<dbReference type="NCBIfam" id="TIGR02714">
    <property type="entry name" value="amido_AtzD_TrzD"/>
    <property type="match status" value="1"/>
</dbReference>
<dbReference type="Pfam" id="PF09663">
    <property type="entry name" value="Amido_AtzD_TrzD"/>
    <property type="match status" value="1"/>
</dbReference>
<comment type="function">
    <text evidence="1 2">Responsible for the hydrolysis of barbituric acid (2,4,6-trihydroxy-1,3-pyrimidine), an intermediate in the oxidative catabolism of pyrimidines. Catalyzes the hydrolytic opening of the pyrimidine ring of barbituric acid to yield ureidomalonic acid. Can also use cyanuric acid as a substrate, albeit with lower efficiency.</text>
</comment>
<comment type="catalytic activity">
    <reaction evidence="1">
        <text>barbiturate + H2O = 3-oxo-3-ureidopropanoate</text>
        <dbReference type="Rhea" id="RHEA:18653"/>
        <dbReference type="ChEBI" id="CHEBI:15377"/>
        <dbReference type="ChEBI" id="CHEBI:58775"/>
        <dbReference type="ChEBI" id="CHEBI:77938"/>
        <dbReference type="EC" id="3.5.2.1"/>
    </reaction>
</comment>
<comment type="pathway">
    <text evidence="1">Pyrimidine metabolism; uracil degradation via oxidative pathway; malonate and urea from uracil: step 2/3.</text>
</comment>
<comment type="subunit">
    <text evidence="1">Homotetramer.</text>
</comment>
<comment type="domain">
    <text evidence="1">The monomer structure is formed from three repeating units (RUs) that share the same structure as one another. The monomer and the active site possess nearly threefold rotational symmetry, to the extent that the active site possesses three potential Ser-Lys catalytic dyads, but one of the 3 active site surfaces varies in composition suggesting it is involved in conferring substrate specificity.</text>
</comment>
<comment type="similarity">
    <text evidence="1">Belongs to the cyclic amide hydrolase (CyAH) family.</text>
</comment>
<reference key="1">
    <citation type="submission" date="2006-12" db="EMBL/GenBank/DDBJ databases">
        <title>Complete sequence of chromosome 1 of Nocardioides sp. JS614.</title>
        <authorList>
            <person name="Copeland A."/>
            <person name="Lucas S."/>
            <person name="Lapidus A."/>
            <person name="Barry K."/>
            <person name="Detter J.C."/>
            <person name="Glavina del Rio T."/>
            <person name="Hammon N."/>
            <person name="Israni S."/>
            <person name="Dalin E."/>
            <person name="Tice H."/>
            <person name="Pitluck S."/>
            <person name="Thompson L.S."/>
            <person name="Brettin T."/>
            <person name="Bruce D."/>
            <person name="Han C."/>
            <person name="Tapia R."/>
            <person name="Schmutz J."/>
            <person name="Larimer F."/>
            <person name="Land M."/>
            <person name="Hauser L."/>
            <person name="Kyrpides N."/>
            <person name="Kim E."/>
            <person name="Mattes T."/>
            <person name="Gossett J."/>
            <person name="Richardson P."/>
        </authorList>
    </citation>
    <scope>NUCLEOTIDE SEQUENCE [LARGE SCALE GENOMIC DNA]</scope>
    <source>
        <strain>ATCC BAA-499 / JS614</strain>
    </source>
</reference>
<reference key="2">
    <citation type="journal article" date="2017" name="Appl. Environ. Microbiol.">
        <title>High resolution X-ray structures of two functionally distinct members of the cyclic amide hydrolase (CyAH) family of Toblerone fold enzymes.</title>
        <authorList>
            <person name="Peat T.S."/>
            <person name="Balotra S."/>
            <person name="Wilding M."/>
            <person name="Hartley C.J."/>
            <person name="Newman J."/>
            <person name="Scott C."/>
        </authorList>
    </citation>
    <scope>FUNCTION</scope>
    <scope>CATALYTIC ACTIVITY</scope>
</reference>
<accession>A1SPN2</accession>
<evidence type="ECO:0000255" key="1">
    <source>
        <dbReference type="HAMAP-Rule" id="MF_01989"/>
    </source>
</evidence>
<evidence type="ECO:0000269" key="2">
    <source>
    </source>
</evidence>
<proteinExistence type="evidence at protein level"/>
<protein>
    <recommendedName>
        <fullName evidence="1">Barbiturase 2</fullName>
        <ecNumber evidence="1">3.5.2.1</ecNumber>
    </recommendedName>
    <alternativeName>
        <fullName evidence="1">Barbituric acid hydrolase 2</fullName>
        <shortName evidence="1">BAH 2</shortName>
    </alternativeName>
</protein>
<sequence>MTRPIEVRKVPIEHVSDAAGLADLIDAGVFSADDVIAVVGKTEGNGGVNDYTRIISTHAYRAVLEEKGTRSKEEVAQVPLVWSGGTDGVISPHATIFAYAPEGRYLPTDEPRVTVGYAMSEVLLPEDIGRPAMVEKVAAGVRVAMERAGITDPADVHYVQTKTPLLVQDTINDAERRGETVYTHNTLESMDVSNATTALGIAVALGEIEMPTAEQIFHDLSLYSSVASCSSGVELDQAQIVVVGNARGVGGRFRVGHSIMKDALDMDGVWAAIRDAGLDDMPVDCIHPRHIKGRLVNLFLKCEADPTGRVRGRRNIMLDDSDVAWHRQIKACVGGVVAAVSGDPMNFVSVAAVHQGPSGGGPVIAIVDLEA</sequence>